<reference key="1">
    <citation type="journal article" date="2007" name="PLoS Genet.">
        <title>Patterns and implications of gene gain and loss in the evolution of Prochlorococcus.</title>
        <authorList>
            <person name="Kettler G.C."/>
            <person name="Martiny A.C."/>
            <person name="Huang K."/>
            <person name="Zucker J."/>
            <person name="Coleman M.L."/>
            <person name="Rodrigue S."/>
            <person name="Chen F."/>
            <person name="Lapidus A."/>
            <person name="Ferriera S."/>
            <person name="Johnson J."/>
            <person name="Steglich C."/>
            <person name="Church G.M."/>
            <person name="Richardson P."/>
            <person name="Chisholm S.W."/>
        </authorList>
    </citation>
    <scope>NUCLEOTIDE SEQUENCE [LARGE SCALE GENOMIC DNA]</scope>
    <source>
        <strain>MIT 9303</strain>
    </source>
</reference>
<name>RL1_PROM3</name>
<organism>
    <name type="scientific">Prochlorococcus marinus (strain MIT 9303)</name>
    <dbReference type="NCBI Taxonomy" id="59922"/>
    <lineage>
        <taxon>Bacteria</taxon>
        <taxon>Bacillati</taxon>
        <taxon>Cyanobacteriota</taxon>
        <taxon>Cyanophyceae</taxon>
        <taxon>Synechococcales</taxon>
        <taxon>Prochlorococcaceae</taxon>
        <taxon>Prochlorococcus</taxon>
    </lineage>
</organism>
<gene>
    <name evidence="1" type="primary">rplA</name>
    <name evidence="1" type="synonym">rpl1</name>
    <name type="ordered locus">P9303_27781</name>
</gene>
<protein>
    <recommendedName>
        <fullName evidence="1">Large ribosomal subunit protein uL1</fullName>
    </recommendedName>
    <alternativeName>
        <fullName evidence="2">50S ribosomal protein L1</fullName>
    </alternativeName>
</protein>
<proteinExistence type="inferred from homology"/>
<feature type="chain" id="PRO_0000307660" description="Large ribosomal subunit protein uL1">
    <location>
        <begin position="1"/>
        <end position="235"/>
    </location>
</feature>
<dbReference type="EMBL" id="CP000554">
    <property type="protein sequence ID" value="ABM79508.1"/>
    <property type="status" value="ALT_INIT"/>
    <property type="molecule type" value="Genomic_DNA"/>
</dbReference>
<dbReference type="RefSeq" id="WP_041374969.1">
    <property type="nucleotide sequence ID" value="NC_008820.1"/>
</dbReference>
<dbReference type="SMR" id="A2CDE8"/>
<dbReference type="STRING" id="59922.P9303_27781"/>
<dbReference type="KEGG" id="pmf:P9303_27781"/>
<dbReference type="HOGENOM" id="CLU_062853_0_0_3"/>
<dbReference type="BioCyc" id="PMAR59922:G1G80-2437-MONOMER"/>
<dbReference type="Proteomes" id="UP000002274">
    <property type="component" value="Chromosome"/>
</dbReference>
<dbReference type="GO" id="GO:0015934">
    <property type="term" value="C:large ribosomal subunit"/>
    <property type="evidence" value="ECO:0007669"/>
    <property type="project" value="InterPro"/>
</dbReference>
<dbReference type="GO" id="GO:0019843">
    <property type="term" value="F:rRNA binding"/>
    <property type="evidence" value="ECO:0007669"/>
    <property type="project" value="UniProtKB-UniRule"/>
</dbReference>
<dbReference type="GO" id="GO:0003735">
    <property type="term" value="F:structural constituent of ribosome"/>
    <property type="evidence" value="ECO:0007669"/>
    <property type="project" value="InterPro"/>
</dbReference>
<dbReference type="GO" id="GO:0000049">
    <property type="term" value="F:tRNA binding"/>
    <property type="evidence" value="ECO:0007669"/>
    <property type="project" value="UniProtKB-KW"/>
</dbReference>
<dbReference type="GO" id="GO:0006417">
    <property type="term" value="P:regulation of translation"/>
    <property type="evidence" value="ECO:0007669"/>
    <property type="project" value="UniProtKB-KW"/>
</dbReference>
<dbReference type="GO" id="GO:0006412">
    <property type="term" value="P:translation"/>
    <property type="evidence" value="ECO:0007669"/>
    <property type="project" value="UniProtKB-UniRule"/>
</dbReference>
<dbReference type="CDD" id="cd00403">
    <property type="entry name" value="Ribosomal_L1"/>
    <property type="match status" value="1"/>
</dbReference>
<dbReference type="FunFam" id="3.40.50.790:FF:000001">
    <property type="entry name" value="50S ribosomal protein L1"/>
    <property type="match status" value="1"/>
</dbReference>
<dbReference type="Gene3D" id="3.30.190.20">
    <property type="match status" value="1"/>
</dbReference>
<dbReference type="Gene3D" id="3.40.50.790">
    <property type="match status" value="1"/>
</dbReference>
<dbReference type="HAMAP" id="MF_01318_B">
    <property type="entry name" value="Ribosomal_uL1_B"/>
    <property type="match status" value="1"/>
</dbReference>
<dbReference type="InterPro" id="IPR005878">
    <property type="entry name" value="Ribosom_uL1_bac-type"/>
</dbReference>
<dbReference type="InterPro" id="IPR002143">
    <property type="entry name" value="Ribosomal_uL1"/>
</dbReference>
<dbReference type="InterPro" id="IPR023674">
    <property type="entry name" value="Ribosomal_uL1-like"/>
</dbReference>
<dbReference type="InterPro" id="IPR028364">
    <property type="entry name" value="Ribosomal_uL1/biogenesis"/>
</dbReference>
<dbReference type="InterPro" id="IPR016095">
    <property type="entry name" value="Ribosomal_uL1_3-a/b-sand"/>
</dbReference>
<dbReference type="InterPro" id="IPR023673">
    <property type="entry name" value="Ribosomal_uL1_CS"/>
</dbReference>
<dbReference type="NCBIfam" id="TIGR01169">
    <property type="entry name" value="rplA_bact"/>
    <property type="match status" value="1"/>
</dbReference>
<dbReference type="PANTHER" id="PTHR36427">
    <property type="entry name" value="54S RIBOSOMAL PROTEIN L1, MITOCHONDRIAL"/>
    <property type="match status" value="1"/>
</dbReference>
<dbReference type="PANTHER" id="PTHR36427:SF3">
    <property type="entry name" value="LARGE RIBOSOMAL SUBUNIT PROTEIN UL1M"/>
    <property type="match status" value="1"/>
</dbReference>
<dbReference type="Pfam" id="PF00687">
    <property type="entry name" value="Ribosomal_L1"/>
    <property type="match status" value="1"/>
</dbReference>
<dbReference type="PIRSF" id="PIRSF002155">
    <property type="entry name" value="Ribosomal_L1"/>
    <property type="match status" value="1"/>
</dbReference>
<dbReference type="SUPFAM" id="SSF56808">
    <property type="entry name" value="Ribosomal protein L1"/>
    <property type="match status" value="1"/>
</dbReference>
<dbReference type="PROSITE" id="PS01199">
    <property type="entry name" value="RIBOSOMAL_L1"/>
    <property type="match status" value="1"/>
</dbReference>
<sequence>MPKLSKRITGLLAKVEDRVYQPIEAIQLVKENATAKFDETIEAHVRLGIDPKYTDQQLRTTVALPQGTGQSVRIAVITRGEKLAEAKTAGAELAGDDDLVESIGKGQMDFDLLIATPDMMPKVAKLGRVLGPRGLMPNPKAGTVTTDLAAAIKEFKAGKLEFRADRAGIVHVRFGKASFSADALLENLKTLQETIDRNKPSGAKGRYWKSLYITSTMGPSVEVDVTALQDIEEDA</sequence>
<accession>A2CDE8</accession>
<keyword id="KW-0678">Repressor</keyword>
<keyword id="KW-0687">Ribonucleoprotein</keyword>
<keyword id="KW-0689">Ribosomal protein</keyword>
<keyword id="KW-0694">RNA-binding</keyword>
<keyword id="KW-0699">rRNA-binding</keyword>
<keyword id="KW-0810">Translation regulation</keyword>
<keyword id="KW-0820">tRNA-binding</keyword>
<evidence type="ECO:0000255" key="1">
    <source>
        <dbReference type="HAMAP-Rule" id="MF_01318"/>
    </source>
</evidence>
<evidence type="ECO:0000305" key="2"/>
<comment type="function">
    <text evidence="1">Binds directly to 23S rRNA. The L1 stalk is quite mobile in the ribosome, and is involved in E site tRNA release.</text>
</comment>
<comment type="function">
    <text evidence="1">Protein L1 is also a translational repressor protein, it controls the translation of the L11 operon by binding to its mRNA.</text>
</comment>
<comment type="subunit">
    <text evidence="1">Part of the 50S ribosomal subunit.</text>
</comment>
<comment type="similarity">
    <text evidence="1">Belongs to the universal ribosomal protein uL1 family.</text>
</comment>
<comment type="sequence caution" evidence="2">
    <conflict type="erroneous initiation">
        <sequence resource="EMBL-CDS" id="ABM79508"/>
    </conflict>
</comment>